<comment type="function">
    <text evidence="1">Could be involved in insertion of integral membrane proteins into the membrane.</text>
</comment>
<comment type="subcellular location">
    <subcellularLocation>
        <location evidence="1">Cell membrane</location>
        <topology evidence="1">Peripheral membrane protein</topology>
        <orientation evidence="1">Cytoplasmic side</orientation>
    </subcellularLocation>
</comment>
<comment type="similarity">
    <text evidence="1">Belongs to the UPF0161 family.</text>
</comment>
<protein>
    <recommendedName>
        <fullName evidence="1">Putative membrane protein insertion efficiency factor</fullName>
    </recommendedName>
</protein>
<accession>Q8XH27</accession>
<evidence type="ECO:0000255" key="1">
    <source>
        <dbReference type="HAMAP-Rule" id="MF_00386"/>
    </source>
</evidence>
<proteinExistence type="inferred from homology"/>
<dbReference type="EMBL" id="BA000016">
    <property type="protein sequence ID" value="BAB82364.1"/>
    <property type="molecule type" value="Genomic_DNA"/>
</dbReference>
<dbReference type="STRING" id="195102.gene:10492002"/>
<dbReference type="KEGG" id="cpe:CPE2658"/>
<dbReference type="HOGENOM" id="CLU_144811_6_0_9"/>
<dbReference type="Proteomes" id="UP000000818">
    <property type="component" value="Chromosome"/>
</dbReference>
<dbReference type="GO" id="GO:0005886">
    <property type="term" value="C:plasma membrane"/>
    <property type="evidence" value="ECO:0007669"/>
    <property type="project" value="UniProtKB-SubCell"/>
</dbReference>
<dbReference type="HAMAP" id="MF_00386">
    <property type="entry name" value="UPF0161_YidD"/>
    <property type="match status" value="1"/>
</dbReference>
<dbReference type="InterPro" id="IPR002696">
    <property type="entry name" value="Membr_insert_effic_factor_YidD"/>
</dbReference>
<dbReference type="NCBIfam" id="TIGR00278">
    <property type="entry name" value="membrane protein insertion efficiency factor YidD"/>
    <property type="match status" value="1"/>
</dbReference>
<dbReference type="PANTHER" id="PTHR33383">
    <property type="entry name" value="MEMBRANE PROTEIN INSERTION EFFICIENCY FACTOR-RELATED"/>
    <property type="match status" value="1"/>
</dbReference>
<dbReference type="PANTHER" id="PTHR33383:SF1">
    <property type="entry name" value="MEMBRANE PROTEIN INSERTION EFFICIENCY FACTOR-RELATED"/>
    <property type="match status" value="1"/>
</dbReference>
<dbReference type="Pfam" id="PF01809">
    <property type="entry name" value="YidD"/>
    <property type="match status" value="1"/>
</dbReference>
<dbReference type="SMART" id="SM01234">
    <property type="entry name" value="Haemolytic"/>
    <property type="match status" value="1"/>
</dbReference>
<name>YIDD_CLOPE</name>
<reference key="1">
    <citation type="journal article" date="2002" name="Proc. Natl. Acad. Sci. U.S.A.">
        <title>Complete genome sequence of Clostridium perfringens, an anaerobic flesh-eater.</title>
        <authorList>
            <person name="Shimizu T."/>
            <person name="Ohtani K."/>
            <person name="Hirakawa H."/>
            <person name="Ohshima K."/>
            <person name="Yamashita A."/>
            <person name="Shiba T."/>
            <person name="Ogasawara N."/>
            <person name="Hattori M."/>
            <person name="Kuhara S."/>
            <person name="Hayashi H."/>
        </authorList>
    </citation>
    <scope>NUCLEOTIDE SEQUENCE [LARGE SCALE GENOMIC DNA]</scope>
    <source>
        <strain>13 / Type A</strain>
    </source>
</reference>
<feature type="chain" id="PRO_0000171815" description="Putative membrane protein insertion efficiency factor">
    <location>
        <begin position="1"/>
        <end position="69"/>
    </location>
</feature>
<sequence length="69" mass="8072">MKKLFIVMIKFYRKYISPLKRPCCRFYPTCSQYALEAIQKYGAFKGGFMSIGRILRCNPFCKGGYDPVK</sequence>
<gene>
    <name type="ordered locus">CPE2658</name>
</gene>
<organism>
    <name type="scientific">Clostridium perfringens (strain 13 / Type A)</name>
    <dbReference type="NCBI Taxonomy" id="195102"/>
    <lineage>
        <taxon>Bacteria</taxon>
        <taxon>Bacillati</taxon>
        <taxon>Bacillota</taxon>
        <taxon>Clostridia</taxon>
        <taxon>Eubacteriales</taxon>
        <taxon>Clostridiaceae</taxon>
        <taxon>Clostridium</taxon>
    </lineage>
</organism>
<keyword id="KW-1003">Cell membrane</keyword>
<keyword id="KW-0472">Membrane</keyword>
<keyword id="KW-1185">Reference proteome</keyword>